<accession>P09249</accession>
<organism>
    <name type="scientific">Varicella-zoster virus (strain Dumas)</name>
    <name type="common">HHV-3</name>
    <name type="synonym">Human herpesvirus 3</name>
    <dbReference type="NCBI Taxonomy" id="10338"/>
    <lineage>
        <taxon>Viruses</taxon>
        <taxon>Duplodnaviria</taxon>
        <taxon>Heunggongvirae</taxon>
        <taxon>Peploviricota</taxon>
        <taxon>Herviviricetes</taxon>
        <taxon>Herpesvirales</taxon>
        <taxon>Orthoherpesviridae</taxon>
        <taxon>Alphaherpesvirinae</taxon>
        <taxon>Varicellovirus</taxon>
        <taxon>Varicellovirus humanalpha3</taxon>
        <taxon>Human herpesvirus 3</taxon>
    </lineage>
</organism>
<keyword id="KW-0489">Methyltransferase</keyword>
<keyword id="KW-0545">Nucleotide biosynthesis</keyword>
<keyword id="KW-1185">Reference proteome</keyword>
<keyword id="KW-0808">Transferase</keyword>
<comment type="function">
    <text evidence="1">Catalyzes the reductive methylation of deoxyuridylate to thymidylate.</text>
</comment>
<comment type="catalytic activity">
    <reaction>
        <text>dUMP + (6R)-5,10-methylene-5,6,7,8-tetrahydrofolate = 7,8-dihydrofolate + dTMP</text>
        <dbReference type="Rhea" id="RHEA:12104"/>
        <dbReference type="ChEBI" id="CHEBI:15636"/>
        <dbReference type="ChEBI" id="CHEBI:57451"/>
        <dbReference type="ChEBI" id="CHEBI:63528"/>
        <dbReference type="ChEBI" id="CHEBI:246422"/>
        <dbReference type="EC" id="2.1.1.45"/>
    </reaction>
</comment>
<comment type="pathway">
    <text>Pyrimidine metabolism; dTTP biosynthesis.</text>
</comment>
<comment type="subunit">
    <text evidence="1">Homodimer.</text>
</comment>
<comment type="similarity">
    <text evidence="3">Belongs to the thymidylate synthase family.</text>
</comment>
<dbReference type="EC" id="2.1.1.45"/>
<dbReference type="EMBL" id="X04370">
    <property type="protein sequence ID" value="CAA27896.1"/>
    <property type="molecule type" value="Genomic_DNA"/>
</dbReference>
<dbReference type="PIR" id="D27342">
    <property type="entry name" value="SYBE13"/>
</dbReference>
<dbReference type="SMR" id="P09249"/>
<dbReference type="UniPathway" id="UPA00575"/>
<dbReference type="Proteomes" id="UP000002602">
    <property type="component" value="Genome"/>
</dbReference>
<dbReference type="GO" id="GO:0004799">
    <property type="term" value="F:thymidylate synthase activity"/>
    <property type="evidence" value="ECO:0007669"/>
    <property type="project" value="UniProtKB-EC"/>
</dbReference>
<dbReference type="GO" id="GO:0006231">
    <property type="term" value="P:dTMP biosynthetic process"/>
    <property type="evidence" value="ECO:0007669"/>
    <property type="project" value="InterPro"/>
</dbReference>
<dbReference type="GO" id="GO:0006235">
    <property type="term" value="P:dTTP biosynthetic process"/>
    <property type="evidence" value="ECO:0007669"/>
    <property type="project" value="UniProtKB-UniPathway"/>
</dbReference>
<dbReference type="GO" id="GO:0032259">
    <property type="term" value="P:methylation"/>
    <property type="evidence" value="ECO:0007669"/>
    <property type="project" value="UniProtKB-KW"/>
</dbReference>
<dbReference type="CDD" id="cd00351">
    <property type="entry name" value="TS_Pyrimidine_HMase"/>
    <property type="match status" value="1"/>
</dbReference>
<dbReference type="FunFam" id="3.30.572.10:FF:000002">
    <property type="entry name" value="Possible thymidylate synthase"/>
    <property type="match status" value="1"/>
</dbReference>
<dbReference type="Gene3D" id="3.30.572.10">
    <property type="entry name" value="Thymidylate synthase/dCMP hydroxymethylase domain"/>
    <property type="match status" value="1"/>
</dbReference>
<dbReference type="HAMAP" id="MF_00008">
    <property type="entry name" value="Thymidy_synth_bact"/>
    <property type="match status" value="1"/>
</dbReference>
<dbReference type="InterPro" id="IPR045097">
    <property type="entry name" value="Thymidate_synth/dCMP_Mease"/>
</dbReference>
<dbReference type="InterPro" id="IPR023451">
    <property type="entry name" value="Thymidate_synth/dCMP_Mease_dom"/>
</dbReference>
<dbReference type="InterPro" id="IPR036926">
    <property type="entry name" value="Thymidate_synth/dCMP_Mease_sf"/>
</dbReference>
<dbReference type="InterPro" id="IPR000398">
    <property type="entry name" value="Thymidylate_synthase"/>
</dbReference>
<dbReference type="InterPro" id="IPR020940">
    <property type="entry name" value="Thymidylate_synthase_AS"/>
</dbReference>
<dbReference type="NCBIfam" id="NF002497">
    <property type="entry name" value="PRK01827.1-3"/>
    <property type="match status" value="1"/>
</dbReference>
<dbReference type="NCBIfam" id="TIGR03284">
    <property type="entry name" value="thym_sym"/>
    <property type="match status" value="1"/>
</dbReference>
<dbReference type="PANTHER" id="PTHR11548:SF2">
    <property type="entry name" value="THYMIDYLATE SYNTHASE"/>
    <property type="match status" value="1"/>
</dbReference>
<dbReference type="PANTHER" id="PTHR11548">
    <property type="entry name" value="THYMIDYLATE SYNTHASE 1"/>
    <property type="match status" value="1"/>
</dbReference>
<dbReference type="Pfam" id="PF00303">
    <property type="entry name" value="Thymidylat_synt"/>
    <property type="match status" value="1"/>
</dbReference>
<dbReference type="PRINTS" id="PR00108">
    <property type="entry name" value="THYMDSNTHASE"/>
</dbReference>
<dbReference type="SUPFAM" id="SSF55831">
    <property type="entry name" value="Thymidylate synthase/dCMP hydroxymethylase"/>
    <property type="match status" value="1"/>
</dbReference>
<dbReference type="PROSITE" id="PS00091">
    <property type="entry name" value="THYMIDYLATE_SYNTHASE"/>
    <property type="match status" value="1"/>
</dbReference>
<reference key="1">
    <citation type="journal article" date="1986" name="J. Gen. Virol.">
        <title>The complete DNA sequence of varicella-zoster virus.</title>
        <authorList>
            <person name="Davison A.J."/>
            <person name="Scott J.E."/>
        </authorList>
    </citation>
    <scope>NUCLEOTIDE SEQUENCE [LARGE SCALE GENOMIC DNA]</scope>
</reference>
<feature type="chain" id="PRO_0000141066" description="Thymidylate synthase">
    <location>
        <begin position="1"/>
        <end position="301"/>
    </location>
</feature>
<feature type="active site" description="Nucleophile" evidence="2">
    <location>
        <position position="183"/>
    </location>
</feature>
<feature type="binding site" description="in other chain" evidence="2">
    <location>
        <position position="38"/>
    </location>
    <ligand>
        <name>dUMP</name>
        <dbReference type="ChEBI" id="CHEBI:246422"/>
        <note>ligand shared between dimeric partners</note>
    </ligand>
</feature>
<feature type="binding site" evidence="2">
    <location>
        <begin position="163"/>
        <end position="164"/>
    </location>
    <ligand>
        <name>dUMP</name>
        <dbReference type="ChEBI" id="CHEBI:246422"/>
        <note>ligand shared between dimeric partners</note>
    </ligand>
</feature>
<feature type="binding site" description="in other chain" evidence="2">
    <location>
        <begin position="203"/>
        <end position="206"/>
    </location>
    <ligand>
        <name>dUMP</name>
        <dbReference type="ChEBI" id="CHEBI:246422"/>
        <note>ligand shared between dimeric partners</note>
    </ligand>
</feature>
<feature type="binding site" evidence="2">
    <location>
        <position position="206"/>
    </location>
    <ligand>
        <name>(6R)-5,10-methylene-5,6,7,8-tetrahydrofolate</name>
        <dbReference type="ChEBI" id="CHEBI:15636"/>
    </ligand>
</feature>
<feature type="binding site" description="in other chain" evidence="2">
    <location>
        <position position="214"/>
    </location>
    <ligand>
        <name>dUMP</name>
        <dbReference type="ChEBI" id="CHEBI:246422"/>
        <note>ligand shared between dimeric partners</note>
    </ligand>
</feature>
<feature type="binding site" description="in other chain" evidence="2">
    <location>
        <begin position="244"/>
        <end position="246"/>
    </location>
    <ligand>
        <name>dUMP</name>
        <dbReference type="ChEBI" id="CHEBI:246422"/>
        <note>ligand shared between dimeric partners</note>
    </ligand>
</feature>
<feature type="binding site" evidence="2">
    <location>
        <position position="300"/>
    </location>
    <ligand>
        <name>(6R)-5,10-methylene-5,6,7,8-tetrahydrofolate</name>
        <dbReference type="ChEBI" id="CHEBI:15636"/>
    </ligand>
</feature>
<sequence>MGDLSCWTKVPGFTLTGELQYLKQVDDILRYGVRKRDRTGIGTLSLFGMQARYNLRNEFPLLTTKRVFWRAVVEELLWFIRGSTDSKELAAKDIHIWDIYGSSKFLNRNGFHKRHTGDLGPIYGFQWRHFGAEYKDCQSNYLQQGIDQLQTVIDTIKTNPESRRMIISSWNPKDIPLMVLPPCHTLCQFYVANGELSCQVYQRSGDMGLGVPFNIAGYALLTYIVAHVTGLKTGDLIHTMGDAHIYLNHIDALKVQLARSPKPFPCLKIIRNVTDINDFKWDDFQLDGYNPHPPLKMEMAL</sequence>
<name>TYSY_VZVD</name>
<proteinExistence type="inferred from homology"/>
<gene>
    <name type="ORF">ORF13</name>
</gene>
<protein>
    <recommendedName>
        <fullName>Thymidylate synthase</fullName>
        <shortName>TS</shortName>
        <shortName>TSase</shortName>
        <ecNumber>2.1.1.45</ecNumber>
    </recommendedName>
</protein>
<organismHost>
    <name type="scientific">Homo sapiens</name>
    <name type="common">Human</name>
    <dbReference type="NCBI Taxonomy" id="9606"/>
</organismHost>
<evidence type="ECO:0000250" key="1"/>
<evidence type="ECO:0000250" key="2">
    <source>
        <dbReference type="UniProtKB" id="P0A884"/>
    </source>
</evidence>
<evidence type="ECO:0000305" key="3"/>